<gene>
    <name evidence="1" type="primary">lig</name>
    <name type="ordered locus">Memar_1865</name>
</gene>
<protein>
    <recommendedName>
        <fullName evidence="1">DNA ligase</fullName>
        <ecNumber evidence="1">6.5.1.1</ecNumber>
    </recommendedName>
    <alternativeName>
        <fullName evidence="1">Polydeoxyribonucleotide synthase [ATP]</fullName>
    </alternativeName>
</protein>
<proteinExistence type="inferred from homology"/>
<reference key="1">
    <citation type="journal article" date="2009" name="Stand. Genomic Sci.">
        <title>Complete genome sequence of Methanoculleus marisnigri Romesser et al. 1981 type strain JR1.</title>
        <authorList>
            <person name="Anderson I.J."/>
            <person name="Sieprawska-Lupa M."/>
            <person name="Lapidus A."/>
            <person name="Nolan M."/>
            <person name="Copeland A."/>
            <person name="Glavina Del Rio T."/>
            <person name="Tice H."/>
            <person name="Dalin E."/>
            <person name="Barry K."/>
            <person name="Saunders E."/>
            <person name="Han C."/>
            <person name="Brettin T."/>
            <person name="Detter J.C."/>
            <person name="Bruce D."/>
            <person name="Mikhailova N."/>
            <person name="Pitluck S."/>
            <person name="Hauser L."/>
            <person name="Land M."/>
            <person name="Lucas S."/>
            <person name="Richardson P."/>
            <person name="Whitman W.B."/>
            <person name="Kyrpides N.C."/>
        </authorList>
    </citation>
    <scope>NUCLEOTIDE SEQUENCE [LARGE SCALE GENOMIC DNA]</scope>
    <source>
        <strain>ATCC 35101 / DSM 1498 / JR1</strain>
    </source>
</reference>
<evidence type="ECO:0000255" key="1">
    <source>
        <dbReference type="HAMAP-Rule" id="MF_00407"/>
    </source>
</evidence>
<feature type="chain" id="PRO_0000365255" description="DNA ligase">
    <location>
        <begin position="1"/>
        <end position="548"/>
    </location>
</feature>
<feature type="active site" description="N6-AMP-lysine intermediate" evidence="1">
    <location>
        <position position="246"/>
    </location>
</feature>
<feature type="binding site" evidence="1">
    <location>
        <position position="244"/>
    </location>
    <ligand>
        <name>ATP</name>
        <dbReference type="ChEBI" id="CHEBI:30616"/>
    </ligand>
</feature>
<feature type="binding site" evidence="1">
    <location>
        <position position="251"/>
    </location>
    <ligand>
        <name>ATP</name>
        <dbReference type="ChEBI" id="CHEBI:30616"/>
    </ligand>
</feature>
<feature type="binding site" evidence="1">
    <location>
        <position position="266"/>
    </location>
    <ligand>
        <name>ATP</name>
        <dbReference type="ChEBI" id="CHEBI:30616"/>
    </ligand>
</feature>
<feature type="binding site" evidence="1">
    <location>
        <position position="295"/>
    </location>
    <ligand>
        <name>ATP</name>
        <dbReference type="ChEBI" id="CHEBI:30616"/>
    </ligand>
</feature>
<feature type="binding site" evidence="1">
    <location>
        <position position="334"/>
    </location>
    <ligand>
        <name>ATP</name>
        <dbReference type="ChEBI" id="CHEBI:30616"/>
    </ligand>
</feature>
<feature type="binding site" evidence="1">
    <location>
        <position position="405"/>
    </location>
    <ligand>
        <name>ATP</name>
        <dbReference type="ChEBI" id="CHEBI:30616"/>
    </ligand>
</feature>
<feature type="binding site" evidence="1">
    <location>
        <position position="411"/>
    </location>
    <ligand>
        <name>ATP</name>
        <dbReference type="ChEBI" id="CHEBI:30616"/>
    </ligand>
</feature>
<name>DNLI_METMJ</name>
<comment type="function">
    <text evidence="1">DNA ligase that seals nicks in double-stranded DNA during DNA replication, DNA recombination and DNA repair.</text>
</comment>
<comment type="catalytic activity">
    <reaction evidence="1">
        <text>ATP + (deoxyribonucleotide)n-3'-hydroxyl + 5'-phospho-(deoxyribonucleotide)m = (deoxyribonucleotide)n+m + AMP + diphosphate.</text>
        <dbReference type="EC" id="6.5.1.1"/>
    </reaction>
</comment>
<comment type="cofactor">
    <cofactor evidence="1">
        <name>Mg(2+)</name>
        <dbReference type="ChEBI" id="CHEBI:18420"/>
    </cofactor>
</comment>
<comment type="similarity">
    <text evidence="1">Belongs to the ATP-dependent DNA ligase family.</text>
</comment>
<dbReference type="EC" id="6.5.1.1" evidence="1"/>
<dbReference type="EMBL" id="CP000562">
    <property type="protein sequence ID" value="ABN57791.1"/>
    <property type="molecule type" value="Genomic_DNA"/>
</dbReference>
<dbReference type="RefSeq" id="WP_011844700.1">
    <property type="nucleotide sequence ID" value="NC_009051.1"/>
</dbReference>
<dbReference type="SMR" id="A3CWP1"/>
<dbReference type="STRING" id="368407.Memar_1865"/>
<dbReference type="GeneID" id="4846179"/>
<dbReference type="KEGG" id="mem:Memar_1865"/>
<dbReference type="eggNOG" id="arCOG01347">
    <property type="taxonomic scope" value="Archaea"/>
</dbReference>
<dbReference type="HOGENOM" id="CLU_005138_6_0_2"/>
<dbReference type="OrthoDB" id="31274at2157"/>
<dbReference type="Proteomes" id="UP000002146">
    <property type="component" value="Chromosome"/>
</dbReference>
<dbReference type="GO" id="GO:0005524">
    <property type="term" value="F:ATP binding"/>
    <property type="evidence" value="ECO:0007669"/>
    <property type="project" value="UniProtKB-UniRule"/>
</dbReference>
<dbReference type="GO" id="GO:0003677">
    <property type="term" value="F:DNA binding"/>
    <property type="evidence" value="ECO:0007669"/>
    <property type="project" value="InterPro"/>
</dbReference>
<dbReference type="GO" id="GO:0003910">
    <property type="term" value="F:DNA ligase (ATP) activity"/>
    <property type="evidence" value="ECO:0007669"/>
    <property type="project" value="UniProtKB-UniRule"/>
</dbReference>
<dbReference type="GO" id="GO:0046872">
    <property type="term" value="F:metal ion binding"/>
    <property type="evidence" value="ECO:0007669"/>
    <property type="project" value="UniProtKB-KW"/>
</dbReference>
<dbReference type="GO" id="GO:0051301">
    <property type="term" value="P:cell division"/>
    <property type="evidence" value="ECO:0007669"/>
    <property type="project" value="UniProtKB-KW"/>
</dbReference>
<dbReference type="GO" id="GO:0071897">
    <property type="term" value="P:DNA biosynthetic process"/>
    <property type="evidence" value="ECO:0007669"/>
    <property type="project" value="InterPro"/>
</dbReference>
<dbReference type="GO" id="GO:0006310">
    <property type="term" value="P:DNA recombination"/>
    <property type="evidence" value="ECO:0007669"/>
    <property type="project" value="UniProtKB-UniRule"/>
</dbReference>
<dbReference type="GO" id="GO:0006281">
    <property type="term" value="P:DNA repair"/>
    <property type="evidence" value="ECO:0007669"/>
    <property type="project" value="UniProtKB-UniRule"/>
</dbReference>
<dbReference type="GO" id="GO:0006273">
    <property type="term" value="P:lagging strand elongation"/>
    <property type="evidence" value="ECO:0007669"/>
    <property type="project" value="TreeGrafter"/>
</dbReference>
<dbReference type="CDD" id="cd07901">
    <property type="entry name" value="Adenylation_DNA_ligase_Arch_LigB"/>
    <property type="match status" value="1"/>
</dbReference>
<dbReference type="CDD" id="cd07972">
    <property type="entry name" value="OBF_DNA_ligase_Arch_LigB"/>
    <property type="match status" value="1"/>
</dbReference>
<dbReference type="FunFam" id="1.10.3260.10:FF:000007">
    <property type="entry name" value="DNA ligase"/>
    <property type="match status" value="1"/>
</dbReference>
<dbReference type="Gene3D" id="1.10.3260.10">
    <property type="entry name" value="DNA ligase, ATP-dependent, N-terminal domain"/>
    <property type="match status" value="1"/>
</dbReference>
<dbReference type="Gene3D" id="3.30.470.30">
    <property type="entry name" value="DNA ligase/mRNA capping enzyme"/>
    <property type="match status" value="1"/>
</dbReference>
<dbReference type="Gene3D" id="2.40.50.140">
    <property type="entry name" value="Nucleic acid-binding proteins"/>
    <property type="match status" value="1"/>
</dbReference>
<dbReference type="HAMAP" id="MF_00407">
    <property type="entry name" value="DNA_ligase"/>
    <property type="match status" value="1"/>
</dbReference>
<dbReference type="InterPro" id="IPR050191">
    <property type="entry name" value="ATP-dep_DNA_ligase"/>
</dbReference>
<dbReference type="InterPro" id="IPR022865">
    <property type="entry name" value="DNA_ligae_ATP-dep_bac/arc"/>
</dbReference>
<dbReference type="InterPro" id="IPR000977">
    <property type="entry name" value="DNA_ligase_ATP-dep"/>
</dbReference>
<dbReference type="InterPro" id="IPR012309">
    <property type="entry name" value="DNA_ligase_ATP-dep_C"/>
</dbReference>
<dbReference type="InterPro" id="IPR012310">
    <property type="entry name" value="DNA_ligase_ATP-dep_cent"/>
</dbReference>
<dbReference type="InterPro" id="IPR016059">
    <property type="entry name" value="DNA_ligase_ATP-dep_CS"/>
</dbReference>
<dbReference type="InterPro" id="IPR012308">
    <property type="entry name" value="DNA_ligase_ATP-dep_N"/>
</dbReference>
<dbReference type="InterPro" id="IPR036599">
    <property type="entry name" value="DNA_ligase_N_sf"/>
</dbReference>
<dbReference type="InterPro" id="IPR012340">
    <property type="entry name" value="NA-bd_OB-fold"/>
</dbReference>
<dbReference type="NCBIfam" id="TIGR00574">
    <property type="entry name" value="dnl1"/>
    <property type="match status" value="1"/>
</dbReference>
<dbReference type="PANTHER" id="PTHR45674:SF7">
    <property type="entry name" value="DNA LIGASE"/>
    <property type="match status" value="1"/>
</dbReference>
<dbReference type="PANTHER" id="PTHR45674">
    <property type="entry name" value="DNA LIGASE 1/3 FAMILY MEMBER"/>
    <property type="match status" value="1"/>
</dbReference>
<dbReference type="Pfam" id="PF04679">
    <property type="entry name" value="DNA_ligase_A_C"/>
    <property type="match status" value="1"/>
</dbReference>
<dbReference type="Pfam" id="PF01068">
    <property type="entry name" value="DNA_ligase_A_M"/>
    <property type="match status" value="1"/>
</dbReference>
<dbReference type="Pfam" id="PF04675">
    <property type="entry name" value="DNA_ligase_A_N"/>
    <property type="match status" value="1"/>
</dbReference>
<dbReference type="SUPFAM" id="SSF117018">
    <property type="entry name" value="ATP-dependent DNA ligase DNA-binding domain"/>
    <property type="match status" value="1"/>
</dbReference>
<dbReference type="SUPFAM" id="SSF56091">
    <property type="entry name" value="DNA ligase/mRNA capping enzyme, catalytic domain"/>
    <property type="match status" value="1"/>
</dbReference>
<dbReference type="SUPFAM" id="SSF50249">
    <property type="entry name" value="Nucleic acid-binding proteins"/>
    <property type="match status" value="1"/>
</dbReference>
<dbReference type="PROSITE" id="PS00333">
    <property type="entry name" value="DNA_LIGASE_A2"/>
    <property type="match status" value="1"/>
</dbReference>
<dbReference type="PROSITE" id="PS50160">
    <property type="entry name" value="DNA_LIGASE_A3"/>
    <property type="match status" value="1"/>
</dbReference>
<keyword id="KW-0067">ATP-binding</keyword>
<keyword id="KW-0131">Cell cycle</keyword>
<keyword id="KW-0132">Cell division</keyword>
<keyword id="KW-0227">DNA damage</keyword>
<keyword id="KW-0233">DNA recombination</keyword>
<keyword id="KW-0234">DNA repair</keyword>
<keyword id="KW-0235">DNA replication</keyword>
<keyword id="KW-0436">Ligase</keyword>
<keyword id="KW-0460">Magnesium</keyword>
<keyword id="KW-0479">Metal-binding</keyword>
<keyword id="KW-0547">Nucleotide-binding</keyword>
<accession>A3CWP1</accession>
<sequence>MQFLEFAQVCEHLEGTPGRLDMIEQVAAVLPRLDDEELPVFVRFVMGRVFPDWSTKKLGVGPNLLYDAVAYVVGTKRETVREAINTTGDVGLAVEGLLARKEQTSFFIQELDLLDVYRELERMAAAEGQRSQREKLRVAQGLFGNARPLEGRYLARLLLEELRIGMGEGNVRDAVAKAFELDVRLVEHAHQALNDLGEVALLARRDPDALSGVTIEPFRPVKMMLAQAGTIAAQIEDHGEVAVEYKYDGSRFQFHKVGDVCRIYSRRLEDVTESLPDIANLLLEATDHDVILDGEAVAVRDGKPMPFQYVIRRFRRKHEVDSMMEKIELVPMVFDILYLDGETLMDRPLAERRKALDEVLGAHVAPQFPATDAAAAEAIYAEALDLGHEGVMVKVLDSPYTPGVRGRLWVKVKPGVETLDLVVVGAEWGEGRRAGTFGSFLLAVQDQGRLLPVGKVATGITDEVLAELYALFKDRVIARSGKEVTLEPEVVFEVGYSEIQTSPNYESGYALRFPRFVRVREDKSVDETETLDSLAERYGRQRNGQGSL</sequence>
<organism>
    <name type="scientific">Methanoculleus marisnigri (strain ATCC 35101 / DSM 1498 / JR1)</name>
    <dbReference type="NCBI Taxonomy" id="368407"/>
    <lineage>
        <taxon>Archaea</taxon>
        <taxon>Methanobacteriati</taxon>
        <taxon>Methanobacteriota</taxon>
        <taxon>Stenosarchaea group</taxon>
        <taxon>Methanomicrobia</taxon>
        <taxon>Methanomicrobiales</taxon>
        <taxon>Methanomicrobiaceae</taxon>
        <taxon>Methanoculleus</taxon>
    </lineage>
</organism>